<name>TM278_MOUSE</name>
<proteinExistence type="evidence at protein level"/>
<protein>
    <recommendedName>
        <fullName>Transmembrane protein 278</fullName>
    </recommendedName>
    <alternativeName>
        <fullName>Transmembrane protein 88B</fullName>
    </alternativeName>
</protein>
<reference key="1">
    <citation type="journal article" date="2005" name="Science">
        <title>The transcriptional landscape of the mammalian genome.</title>
        <authorList>
            <person name="Carninci P."/>
            <person name="Kasukawa T."/>
            <person name="Katayama S."/>
            <person name="Gough J."/>
            <person name="Frith M.C."/>
            <person name="Maeda N."/>
            <person name="Oyama R."/>
            <person name="Ravasi T."/>
            <person name="Lenhard B."/>
            <person name="Wells C."/>
            <person name="Kodzius R."/>
            <person name="Shimokawa K."/>
            <person name="Bajic V.B."/>
            <person name="Brenner S.E."/>
            <person name="Batalov S."/>
            <person name="Forrest A.R."/>
            <person name="Zavolan M."/>
            <person name="Davis M.J."/>
            <person name="Wilming L.G."/>
            <person name="Aidinis V."/>
            <person name="Allen J.E."/>
            <person name="Ambesi-Impiombato A."/>
            <person name="Apweiler R."/>
            <person name="Aturaliya R.N."/>
            <person name="Bailey T.L."/>
            <person name="Bansal M."/>
            <person name="Baxter L."/>
            <person name="Beisel K.W."/>
            <person name="Bersano T."/>
            <person name="Bono H."/>
            <person name="Chalk A.M."/>
            <person name="Chiu K.P."/>
            <person name="Choudhary V."/>
            <person name="Christoffels A."/>
            <person name="Clutterbuck D.R."/>
            <person name="Crowe M.L."/>
            <person name="Dalla E."/>
            <person name="Dalrymple B.P."/>
            <person name="de Bono B."/>
            <person name="Della Gatta G."/>
            <person name="di Bernardo D."/>
            <person name="Down T."/>
            <person name="Engstrom P."/>
            <person name="Fagiolini M."/>
            <person name="Faulkner G."/>
            <person name="Fletcher C.F."/>
            <person name="Fukushima T."/>
            <person name="Furuno M."/>
            <person name="Futaki S."/>
            <person name="Gariboldi M."/>
            <person name="Georgii-Hemming P."/>
            <person name="Gingeras T.R."/>
            <person name="Gojobori T."/>
            <person name="Green R.E."/>
            <person name="Gustincich S."/>
            <person name="Harbers M."/>
            <person name="Hayashi Y."/>
            <person name="Hensch T.K."/>
            <person name="Hirokawa N."/>
            <person name="Hill D."/>
            <person name="Huminiecki L."/>
            <person name="Iacono M."/>
            <person name="Ikeo K."/>
            <person name="Iwama A."/>
            <person name="Ishikawa T."/>
            <person name="Jakt M."/>
            <person name="Kanapin A."/>
            <person name="Katoh M."/>
            <person name="Kawasawa Y."/>
            <person name="Kelso J."/>
            <person name="Kitamura H."/>
            <person name="Kitano H."/>
            <person name="Kollias G."/>
            <person name="Krishnan S.P."/>
            <person name="Kruger A."/>
            <person name="Kummerfeld S.K."/>
            <person name="Kurochkin I.V."/>
            <person name="Lareau L.F."/>
            <person name="Lazarevic D."/>
            <person name="Lipovich L."/>
            <person name="Liu J."/>
            <person name="Liuni S."/>
            <person name="McWilliam S."/>
            <person name="Madan Babu M."/>
            <person name="Madera M."/>
            <person name="Marchionni L."/>
            <person name="Matsuda H."/>
            <person name="Matsuzawa S."/>
            <person name="Miki H."/>
            <person name="Mignone F."/>
            <person name="Miyake S."/>
            <person name="Morris K."/>
            <person name="Mottagui-Tabar S."/>
            <person name="Mulder N."/>
            <person name="Nakano N."/>
            <person name="Nakauchi H."/>
            <person name="Ng P."/>
            <person name="Nilsson R."/>
            <person name="Nishiguchi S."/>
            <person name="Nishikawa S."/>
            <person name="Nori F."/>
            <person name="Ohara O."/>
            <person name="Okazaki Y."/>
            <person name="Orlando V."/>
            <person name="Pang K.C."/>
            <person name="Pavan W.J."/>
            <person name="Pavesi G."/>
            <person name="Pesole G."/>
            <person name="Petrovsky N."/>
            <person name="Piazza S."/>
            <person name="Reed J."/>
            <person name="Reid J.F."/>
            <person name="Ring B.Z."/>
            <person name="Ringwald M."/>
            <person name="Rost B."/>
            <person name="Ruan Y."/>
            <person name="Salzberg S.L."/>
            <person name="Sandelin A."/>
            <person name="Schneider C."/>
            <person name="Schoenbach C."/>
            <person name="Sekiguchi K."/>
            <person name="Semple C.A."/>
            <person name="Seno S."/>
            <person name="Sessa L."/>
            <person name="Sheng Y."/>
            <person name="Shibata Y."/>
            <person name="Shimada H."/>
            <person name="Shimada K."/>
            <person name="Silva D."/>
            <person name="Sinclair B."/>
            <person name="Sperling S."/>
            <person name="Stupka E."/>
            <person name="Sugiura K."/>
            <person name="Sultana R."/>
            <person name="Takenaka Y."/>
            <person name="Taki K."/>
            <person name="Tammoja K."/>
            <person name="Tan S.L."/>
            <person name="Tang S."/>
            <person name="Taylor M.S."/>
            <person name="Tegner J."/>
            <person name="Teichmann S.A."/>
            <person name="Ueda H.R."/>
            <person name="van Nimwegen E."/>
            <person name="Verardo R."/>
            <person name="Wei C.L."/>
            <person name="Yagi K."/>
            <person name="Yamanishi H."/>
            <person name="Zabarovsky E."/>
            <person name="Zhu S."/>
            <person name="Zimmer A."/>
            <person name="Hide W."/>
            <person name="Bult C."/>
            <person name="Grimmond S.M."/>
            <person name="Teasdale R.D."/>
            <person name="Liu E.T."/>
            <person name="Brusic V."/>
            <person name="Quackenbush J."/>
            <person name="Wahlestedt C."/>
            <person name="Mattick J.S."/>
            <person name="Hume D.A."/>
            <person name="Kai C."/>
            <person name="Sasaki D."/>
            <person name="Tomaru Y."/>
            <person name="Fukuda S."/>
            <person name="Kanamori-Katayama M."/>
            <person name="Suzuki M."/>
            <person name="Aoki J."/>
            <person name="Arakawa T."/>
            <person name="Iida J."/>
            <person name="Imamura K."/>
            <person name="Itoh M."/>
            <person name="Kato T."/>
            <person name="Kawaji H."/>
            <person name="Kawagashira N."/>
            <person name="Kawashima T."/>
            <person name="Kojima M."/>
            <person name="Kondo S."/>
            <person name="Konno H."/>
            <person name="Nakano K."/>
            <person name="Ninomiya N."/>
            <person name="Nishio T."/>
            <person name="Okada M."/>
            <person name="Plessy C."/>
            <person name="Shibata K."/>
            <person name="Shiraki T."/>
            <person name="Suzuki S."/>
            <person name="Tagami M."/>
            <person name="Waki K."/>
            <person name="Watahiki A."/>
            <person name="Okamura-Oho Y."/>
            <person name="Suzuki H."/>
            <person name="Kawai J."/>
            <person name="Hayashizaki Y."/>
        </authorList>
    </citation>
    <scope>NUCLEOTIDE SEQUENCE [LARGE SCALE MRNA]</scope>
    <source>
        <strain>C57BL/6J</strain>
        <tissue>Inner ear</tissue>
    </source>
</reference>
<reference key="2">
    <citation type="journal article" date="2009" name="PLoS Biol.">
        <title>Lineage-specific biology revealed by a finished genome assembly of the mouse.</title>
        <authorList>
            <person name="Church D.M."/>
            <person name="Goodstadt L."/>
            <person name="Hillier L.W."/>
            <person name="Zody M.C."/>
            <person name="Goldstein S."/>
            <person name="She X."/>
            <person name="Bult C.J."/>
            <person name="Agarwala R."/>
            <person name="Cherry J.L."/>
            <person name="DiCuccio M."/>
            <person name="Hlavina W."/>
            <person name="Kapustin Y."/>
            <person name="Meric P."/>
            <person name="Maglott D."/>
            <person name="Birtle Z."/>
            <person name="Marques A.C."/>
            <person name="Graves T."/>
            <person name="Zhou S."/>
            <person name="Teague B."/>
            <person name="Potamousis K."/>
            <person name="Churas C."/>
            <person name="Place M."/>
            <person name="Herschleb J."/>
            <person name="Runnheim R."/>
            <person name="Forrest D."/>
            <person name="Amos-Landgraf J."/>
            <person name="Schwartz D.C."/>
            <person name="Cheng Z."/>
            <person name="Lindblad-Toh K."/>
            <person name="Eichler E.E."/>
            <person name="Ponting C.P."/>
        </authorList>
    </citation>
    <scope>NUCLEOTIDE SEQUENCE [LARGE SCALE GENOMIC DNA]</scope>
    <source>
        <strain>C57BL/6J</strain>
    </source>
</reference>
<reference key="3">
    <citation type="submission" date="2007-08" db="EMBL/GenBank/DDBJ databases">
        <authorList>
            <person name="Mural R.J."/>
            <person name="Adams M.D."/>
            <person name="Myers E.W."/>
            <person name="Smith H.O."/>
            <person name="Venter J.C."/>
        </authorList>
    </citation>
    <scope>NUCLEOTIDE SEQUENCE [LARGE SCALE GENOMIC DNA]</scope>
</reference>
<reference key="4">
    <citation type="journal article" date="2004" name="Genome Res.">
        <title>The status, quality, and expansion of the NIH full-length cDNA project: the Mammalian Gene Collection (MGC).</title>
        <authorList>
            <consortium name="The MGC Project Team"/>
        </authorList>
    </citation>
    <scope>NUCLEOTIDE SEQUENCE [LARGE SCALE MRNA]</scope>
    <source>
        <tissue>Brain</tissue>
    </source>
</reference>
<reference key="5">
    <citation type="journal article" date="2010" name="Cell">
        <title>A tissue-specific atlas of mouse protein phosphorylation and expression.</title>
        <authorList>
            <person name="Huttlin E.L."/>
            <person name="Jedrychowski M.P."/>
            <person name="Elias J.E."/>
            <person name="Goswami T."/>
            <person name="Rad R."/>
            <person name="Beausoleil S.A."/>
            <person name="Villen J."/>
            <person name="Haas W."/>
            <person name="Sowa M.E."/>
            <person name="Gygi S.P."/>
        </authorList>
    </citation>
    <scope>IDENTIFICATION BY MASS SPECTROMETRY [LARGE SCALE ANALYSIS]</scope>
    <source>
        <tissue>Brain</tissue>
    </source>
</reference>
<comment type="subcellular location">
    <subcellularLocation>
        <location evidence="3">Membrane</location>
        <topology evidence="3">Multi-pass membrane protein</topology>
    </subcellularLocation>
</comment>
<comment type="similarity">
    <text evidence="3">Belongs to the TMEM88 family.</text>
</comment>
<dbReference type="EMBL" id="AK158459">
    <property type="protein sequence ID" value="BAE34518.1"/>
    <property type="molecule type" value="mRNA"/>
</dbReference>
<dbReference type="EMBL" id="AL670236">
    <property type="status" value="NOT_ANNOTATED_CDS"/>
    <property type="molecule type" value="Genomic_DNA"/>
</dbReference>
<dbReference type="EMBL" id="CH466594">
    <property type="protein sequence ID" value="EDL15031.1"/>
    <property type="molecule type" value="Genomic_DNA"/>
</dbReference>
<dbReference type="EMBL" id="BC147318">
    <property type="protein sequence ID" value="AAI47319.1"/>
    <property type="molecule type" value="mRNA"/>
</dbReference>
<dbReference type="EMBL" id="BC147319">
    <property type="protein sequence ID" value="AAI47320.1"/>
    <property type="molecule type" value="mRNA"/>
</dbReference>
<dbReference type="CCDS" id="CCDS19040.1"/>
<dbReference type="RefSeq" id="NP_001028566.2">
    <property type="nucleotide sequence ID" value="NM_001033394.3"/>
</dbReference>
<dbReference type="SMR" id="Q3TYP4"/>
<dbReference type="FunCoup" id="Q3TYP4">
    <property type="interactions" value="480"/>
</dbReference>
<dbReference type="STRING" id="10090.ENSMUSP00000095349"/>
<dbReference type="PhosphoSitePlus" id="Q3TYP4"/>
<dbReference type="SwissPalm" id="Q3TYP4"/>
<dbReference type="PaxDb" id="10090-ENSMUSP00000095349"/>
<dbReference type="PeptideAtlas" id="Q3TYP4"/>
<dbReference type="ProteomicsDB" id="262832"/>
<dbReference type="Antibodypedia" id="74565">
    <property type="antibodies" value="5 antibodies from 5 providers"/>
</dbReference>
<dbReference type="Ensembl" id="ENSMUST00000097742.3">
    <property type="protein sequence ID" value="ENSMUSP00000095349.3"/>
    <property type="gene ID" value="ENSMUSG00000073680.3"/>
</dbReference>
<dbReference type="GeneID" id="320587"/>
<dbReference type="KEGG" id="mmu:320587"/>
<dbReference type="UCSC" id="uc008wes.2">
    <property type="organism name" value="mouse"/>
</dbReference>
<dbReference type="AGR" id="MGI:2444329"/>
<dbReference type="CTD" id="643965"/>
<dbReference type="MGI" id="MGI:2444329">
    <property type="gene designation" value="Tmem88b"/>
</dbReference>
<dbReference type="VEuPathDB" id="HostDB:ENSMUSG00000073680"/>
<dbReference type="eggNOG" id="ENOG502RYZS">
    <property type="taxonomic scope" value="Eukaryota"/>
</dbReference>
<dbReference type="GeneTree" id="ENSGT00730000111599"/>
<dbReference type="HOGENOM" id="CLU_1602208_0_0_1"/>
<dbReference type="InParanoid" id="Q3TYP4"/>
<dbReference type="OMA" id="EEQLCAW"/>
<dbReference type="OrthoDB" id="9948320at2759"/>
<dbReference type="PhylomeDB" id="Q3TYP4"/>
<dbReference type="TreeFam" id="TF332743"/>
<dbReference type="BioGRID-ORCS" id="320587">
    <property type="hits" value="4 hits in 76 CRISPR screens"/>
</dbReference>
<dbReference type="PRO" id="PR:Q3TYP4"/>
<dbReference type="Proteomes" id="UP000000589">
    <property type="component" value="Chromosome 4"/>
</dbReference>
<dbReference type="RNAct" id="Q3TYP4">
    <property type="molecule type" value="protein"/>
</dbReference>
<dbReference type="Bgee" id="ENSMUSG00000073680">
    <property type="expression patterns" value="Expressed in lumbar subsegment of spinal cord and 100 other cell types or tissues"/>
</dbReference>
<dbReference type="GO" id="GO:0016020">
    <property type="term" value="C:membrane"/>
    <property type="evidence" value="ECO:0007669"/>
    <property type="project" value="UniProtKB-SubCell"/>
</dbReference>
<dbReference type="InterPro" id="IPR033355">
    <property type="entry name" value="TMEM88"/>
</dbReference>
<dbReference type="PANTHER" id="PTHR28628">
    <property type="entry name" value="TRANSMEMBRANE PROTEIN 88-RELATED"/>
    <property type="match status" value="1"/>
</dbReference>
<dbReference type="PANTHER" id="PTHR28628:SF2">
    <property type="entry name" value="TRANSMEMBRANE PROTEIN 88B"/>
    <property type="match status" value="1"/>
</dbReference>
<keyword id="KW-0472">Membrane</keyword>
<keyword id="KW-1185">Reference proteome</keyword>
<keyword id="KW-0812">Transmembrane</keyword>
<keyword id="KW-1133">Transmembrane helix</keyword>
<organism>
    <name type="scientific">Mus musculus</name>
    <name type="common">Mouse</name>
    <dbReference type="NCBI Taxonomy" id="10090"/>
    <lineage>
        <taxon>Eukaryota</taxon>
        <taxon>Metazoa</taxon>
        <taxon>Chordata</taxon>
        <taxon>Craniata</taxon>
        <taxon>Vertebrata</taxon>
        <taxon>Euteleostomi</taxon>
        <taxon>Mammalia</taxon>
        <taxon>Eutheria</taxon>
        <taxon>Euarchontoglires</taxon>
        <taxon>Glires</taxon>
        <taxon>Rodentia</taxon>
        <taxon>Myomorpha</taxon>
        <taxon>Muroidea</taxon>
        <taxon>Muridae</taxon>
        <taxon>Murinae</taxon>
        <taxon>Mus</taxon>
        <taxon>Mus</taxon>
    </lineage>
</organism>
<feature type="chain" id="PRO_0000346447" description="Transmembrane protein 278">
    <location>
        <begin position="1"/>
        <end position="173"/>
    </location>
</feature>
<feature type="transmembrane region" description="Helical" evidence="1">
    <location>
        <begin position="31"/>
        <end position="51"/>
    </location>
</feature>
<feature type="transmembrane region" description="Helical" evidence="1">
    <location>
        <begin position="53"/>
        <end position="73"/>
    </location>
</feature>
<feature type="transmembrane region" description="Helical" evidence="1">
    <location>
        <begin position="107"/>
        <end position="127"/>
    </location>
</feature>
<feature type="region of interest" description="Disordered" evidence="2">
    <location>
        <begin position="1"/>
        <end position="25"/>
    </location>
</feature>
<feature type="region of interest" description="Disordered" evidence="2">
    <location>
        <begin position="141"/>
        <end position="165"/>
    </location>
</feature>
<feature type="compositionally biased region" description="Acidic residues" evidence="2">
    <location>
        <begin position="1"/>
        <end position="14"/>
    </location>
</feature>
<feature type="sequence conflict" description="In Ref. 1; BAE34518, 3; EDL15031 and 4; AAI47319/AAI47320." evidence="3" ref="1 3 4">
    <original>G</original>
    <variation>R</variation>
    <location>
        <position position="45"/>
    </location>
</feature>
<gene>
    <name type="primary">Tmem278</name>
    <name type="synonym">Tmem88b</name>
</gene>
<sequence length="173" mass="18549">MSEQERETEEDEGVASDTAPMLPRRRPTDYHISVLAPILATRGLGTLVLSGRALVGFLLHLLLPGTVFLLVLLPAAAVVYLGFLCHSRVHPAPGPRCRALLSDRGSAALIVFGLLSLPPLVVLAAAARSLLVRRLRPALPDPARTPAPRRPPRSSGDLADGHPDEDKQLCAWV</sequence>
<evidence type="ECO:0000255" key="1"/>
<evidence type="ECO:0000256" key="2">
    <source>
        <dbReference type="SAM" id="MobiDB-lite"/>
    </source>
</evidence>
<evidence type="ECO:0000305" key="3"/>
<accession>Q3TYP4</accession>
<accession>A2AD92</accession>